<organism>
    <name type="scientific">Brucella melitensis biotype 1 (strain ATCC 23456 / CCUG 17765 / NCTC 10094 / 16M)</name>
    <dbReference type="NCBI Taxonomy" id="224914"/>
    <lineage>
        <taxon>Bacteria</taxon>
        <taxon>Pseudomonadati</taxon>
        <taxon>Pseudomonadota</taxon>
        <taxon>Alphaproteobacteria</taxon>
        <taxon>Hyphomicrobiales</taxon>
        <taxon>Brucellaceae</taxon>
        <taxon>Brucella/Ochrobactrum group</taxon>
        <taxon>Brucella</taxon>
    </lineage>
</organism>
<accession>P65546</accession>
<accession>Q8YBG9</accession>
<name>NRDI_BRUME</name>
<reference key="1">
    <citation type="journal article" date="2002" name="Proc. Natl. Acad. Sci. U.S.A.">
        <title>The genome sequence of the facultative intracellular pathogen Brucella melitensis.</title>
        <authorList>
            <person name="DelVecchio V.G."/>
            <person name="Kapatral V."/>
            <person name="Redkar R.J."/>
            <person name="Patra G."/>
            <person name="Mujer C."/>
            <person name="Los T."/>
            <person name="Ivanova N."/>
            <person name="Anderson I."/>
            <person name="Bhattacharyya A."/>
            <person name="Lykidis A."/>
            <person name="Reznik G."/>
            <person name="Jablonski L."/>
            <person name="Larsen N."/>
            <person name="D'Souza M."/>
            <person name="Bernal A."/>
            <person name="Mazur M."/>
            <person name="Goltsman E."/>
            <person name="Selkov E."/>
            <person name="Elzer P.H."/>
            <person name="Hagius S."/>
            <person name="O'Callaghan D."/>
            <person name="Letesson J.-J."/>
            <person name="Haselkorn R."/>
            <person name="Kyrpides N.C."/>
            <person name="Overbeek R."/>
        </authorList>
    </citation>
    <scope>NUCLEOTIDE SEQUENCE [LARGE SCALE GENOMIC DNA]</scope>
    <source>
        <strain>ATCC 23456 / CCUG 17765 / NCTC 10094 / 16M</strain>
    </source>
</reference>
<gene>
    <name evidence="1" type="primary">nrdI</name>
    <name type="ordered locus">BMEII0931</name>
</gene>
<comment type="function">
    <text evidence="1">Probably involved in ribonucleotide reductase function.</text>
</comment>
<comment type="similarity">
    <text evidence="1">Belongs to the NrdI family.</text>
</comment>
<protein>
    <recommendedName>
        <fullName evidence="1">Protein NrdI</fullName>
    </recommendedName>
</protein>
<dbReference type="EMBL" id="AE008918">
    <property type="protein sequence ID" value="AAL54173.1"/>
    <property type="molecule type" value="Genomic_DNA"/>
</dbReference>
<dbReference type="PIR" id="AB3626">
    <property type="entry name" value="AB3626"/>
</dbReference>
<dbReference type="RefSeq" id="WP_002966273.1">
    <property type="nucleotide sequence ID" value="NZ_GG703779.1"/>
</dbReference>
<dbReference type="SMR" id="P65546"/>
<dbReference type="GeneID" id="97535519"/>
<dbReference type="KEGG" id="bme:BMEII0931"/>
<dbReference type="KEGG" id="bmel:DK63_2321"/>
<dbReference type="PATRIC" id="fig|224914.52.peg.2432"/>
<dbReference type="eggNOG" id="COG1780">
    <property type="taxonomic scope" value="Bacteria"/>
</dbReference>
<dbReference type="PhylomeDB" id="P65546"/>
<dbReference type="Proteomes" id="UP000000419">
    <property type="component" value="Chromosome II"/>
</dbReference>
<dbReference type="GO" id="GO:0010181">
    <property type="term" value="F:FMN binding"/>
    <property type="evidence" value="ECO:0007669"/>
    <property type="project" value="InterPro"/>
</dbReference>
<dbReference type="GO" id="GO:0036211">
    <property type="term" value="P:protein modification process"/>
    <property type="evidence" value="ECO:0007669"/>
    <property type="project" value="InterPro"/>
</dbReference>
<dbReference type="Gene3D" id="3.40.50.360">
    <property type="match status" value="1"/>
</dbReference>
<dbReference type="HAMAP" id="MF_00128">
    <property type="entry name" value="NrdI"/>
    <property type="match status" value="1"/>
</dbReference>
<dbReference type="InterPro" id="IPR029039">
    <property type="entry name" value="Flavoprotein-like_sf"/>
</dbReference>
<dbReference type="InterPro" id="IPR020852">
    <property type="entry name" value="RNR_Ib_NrdI_bac"/>
</dbReference>
<dbReference type="InterPro" id="IPR004465">
    <property type="entry name" value="RNR_NrdI"/>
</dbReference>
<dbReference type="NCBIfam" id="TIGR00333">
    <property type="entry name" value="nrdI"/>
    <property type="match status" value="1"/>
</dbReference>
<dbReference type="PANTHER" id="PTHR37297">
    <property type="entry name" value="PROTEIN NRDI"/>
    <property type="match status" value="1"/>
</dbReference>
<dbReference type="PANTHER" id="PTHR37297:SF1">
    <property type="entry name" value="PROTEIN NRDI"/>
    <property type="match status" value="1"/>
</dbReference>
<dbReference type="Pfam" id="PF07972">
    <property type="entry name" value="Flavodoxin_NdrI"/>
    <property type="match status" value="1"/>
</dbReference>
<dbReference type="PIRSF" id="PIRSF005087">
    <property type="entry name" value="NrdI"/>
    <property type="match status" value="1"/>
</dbReference>
<dbReference type="SUPFAM" id="SSF52218">
    <property type="entry name" value="Flavoproteins"/>
    <property type="match status" value="1"/>
</dbReference>
<feature type="chain" id="PRO_0000164309" description="Protein NrdI">
    <location>
        <begin position="1"/>
        <end position="135"/>
    </location>
</feature>
<sequence>MSLIVYFSSRSGNTHRFVERLGVRSSRIPLEASGALQVREPFVLVTPTYGGGSTKGAVPNPVIRFLNDADNRALIRGVIAAGNSNFGEAFCIAGNIISAKCGVPYLYRFELLGTAEDVGNVRNGMEQFWTRQTQA</sequence>
<evidence type="ECO:0000255" key="1">
    <source>
        <dbReference type="HAMAP-Rule" id="MF_00128"/>
    </source>
</evidence>
<proteinExistence type="inferred from homology"/>